<gene>
    <name evidence="1" type="primary">Coq6</name>
    <name type="ORF">CG7277</name>
</gene>
<proteinExistence type="evidence at transcript level"/>
<name>COQ6_DROME</name>
<reference key="1">
    <citation type="journal article" date="2000" name="Science">
        <title>The genome sequence of Drosophila melanogaster.</title>
        <authorList>
            <person name="Adams M.D."/>
            <person name="Celniker S.E."/>
            <person name="Holt R.A."/>
            <person name="Evans C.A."/>
            <person name="Gocayne J.D."/>
            <person name="Amanatides P.G."/>
            <person name="Scherer S.E."/>
            <person name="Li P.W."/>
            <person name="Hoskins R.A."/>
            <person name="Galle R.F."/>
            <person name="George R.A."/>
            <person name="Lewis S.E."/>
            <person name="Richards S."/>
            <person name="Ashburner M."/>
            <person name="Henderson S.N."/>
            <person name="Sutton G.G."/>
            <person name="Wortman J.R."/>
            <person name="Yandell M.D."/>
            <person name="Zhang Q."/>
            <person name="Chen L.X."/>
            <person name="Brandon R.C."/>
            <person name="Rogers Y.-H.C."/>
            <person name="Blazej R.G."/>
            <person name="Champe M."/>
            <person name="Pfeiffer B.D."/>
            <person name="Wan K.H."/>
            <person name="Doyle C."/>
            <person name="Baxter E.G."/>
            <person name="Helt G."/>
            <person name="Nelson C.R."/>
            <person name="Miklos G.L.G."/>
            <person name="Abril J.F."/>
            <person name="Agbayani A."/>
            <person name="An H.-J."/>
            <person name="Andrews-Pfannkoch C."/>
            <person name="Baldwin D."/>
            <person name="Ballew R.M."/>
            <person name="Basu A."/>
            <person name="Baxendale J."/>
            <person name="Bayraktaroglu L."/>
            <person name="Beasley E.M."/>
            <person name="Beeson K.Y."/>
            <person name="Benos P.V."/>
            <person name="Berman B.P."/>
            <person name="Bhandari D."/>
            <person name="Bolshakov S."/>
            <person name="Borkova D."/>
            <person name="Botchan M.R."/>
            <person name="Bouck J."/>
            <person name="Brokstein P."/>
            <person name="Brottier P."/>
            <person name="Burtis K.C."/>
            <person name="Busam D.A."/>
            <person name="Butler H."/>
            <person name="Cadieu E."/>
            <person name="Center A."/>
            <person name="Chandra I."/>
            <person name="Cherry J.M."/>
            <person name="Cawley S."/>
            <person name="Dahlke C."/>
            <person name="Davenport L.B."/>
            <person name="Davies P."/>
            <person name="de Pablos B."/>
            <person name="Delcher A."/>
            <person name="Deng Z."/>
            <person name="Mays A.D."/>
            <person name="Dew I."/>
            <person name="Dietz S.M."/>
            <person name="Dodson K."/>
            <person name="Doup L.E."/>
            <person name="Downes M."/>
            <person name="Dugan-Rocha S."/>
            <person name="Dunkov B.C."/>
            <person name="Dunn P."/>
            <person name="Durbin K.J."/>
            <person name="Evangelista C.C."/>
            <person name="Ferraz C."/>
            <person name="Ferriera S."/>
            <person name="Fleischmann W."/>
            <person name="Fosler C."/>
            <person name="Gabrielian A.E."/>
            <person name="Garg N.S."/>
            <person name="Gelbart W.M."/>
            <person name="Glasser K."/>
            <person name="Glodek A."/>
            <person name="Gong F."/>
            <person name="Gorrell J.H."/>
            <person name="Gu Z."/>
            <person name="Guan P."/>
            <person name="Harris M."/>
            <person name="Harris N.L."/>
            <person name="Harvey D.A."/>
            <person name="Heiman T.J."/>
            <person name="Hernandez J.R."/>
            <person name="Houck J."/>
            <person name="Hostin D."/>
            <person name="Houston K.A."/>
            <person name="Howland T.J."/>
            <person name="Wei M.-H."/>
            <person name="Ibegwam C."/>
            <person name="Jalali M."/>
            <person name="Kalush F."/>
            <person name="Karpen G.H."/>
            <person name="Ke Z."/>
            <person name="Kennison J.A."/>
            <person name="Ketchum K.A."/>
            <person name="Kimmel B.E."/>
            <person name="Kodira C.D."/>
            <person name="Kraft C.L."/>
            <person name="Kravitz S."/>
            <person name="Kulp D."/>
            <person name="Lai Z."/>
            <person name="Lasko P."/>
            <person name="Lei Y."/>
            <person name="Levitsky A.A."/>
            <person name="Li J.H."/>
            <person name="Li Z."/>
            <person name="Liang Y."/>
            <person name="Lin X."/>
            <person name="Liu X."/>
            <person name="Mattei B."/>
            <person name="McIntosh T.C."/>
            <person name="McLeod M.P."/>
            <person name="McPherson D."/>
            <person name="Merkulov G."/>
            <person name="Milshina N.V."/>
            <person name="Mobarry C."/>
            <person name="Morris J."/>
            <person name="Moshrefi A."/>
            <person name="Mount S.M."/>
            <person name="Moy M."/>
            <person name="Murphy B."/>
            <person name="Murphy L."/>
            <person name="Muzny D.M."/>
            <person name="Nelson D.L."/>
            <person name="Nelson D.R."/>
            <person name="Nelson K.A."/>
            <person name="Nixon K."/>
            <person name="Nusskern D.R."/>
            <person name="Pacleb J.M."/>
            <person name="Palazzolo M."/>
            <person name="Pittman G.S."/>
            <person name="Pan S."/>
            <person name="Pollard J."/>
            <person name="Puri V."/>
            <person name="Reese M.G."/>
            <person name="Reinert K."/>
            <person name="Remington K."/>
            <person name="Saunders R.D.C."/>
            <person name="Scheeler F."/>
            <person name="Shen H."/>
            <person name="Shue B.C."/>
            <person name="Siden-Kiamos I."/>
            <person name="Simpson M."/>
            <person name="Skupski M.P."/>
            <person name="Smith T.J."/>
            <person name="Spier E."/>
            <person name="Spradling A.C."/>
            <person name="Stapleton M."/>
            <person name="Strong R."/>
            <person name="Sun E."/>
            <person name="Svirskas R."/>
            <person name="Tector C."/>
            <person name="Turner R."/>
            <person name="Venter E."/>
            <person name="Wang A.H."/>
            <person name="Wang X."/>
            <person name="Wang Z.-Y."/>
            <person name="Wassarman D.A."/>
            <person name="Weinstock G.M."/>
            <person name="Weissenbach J."/>
            <person name="Williams S.M."/>
            <person name="Woodage T."/>
            <person name="Worley K.C."/>
            <person name="Wu D."/>
            <person name="Yang S."/>
            <person name="Yao Q.A."/>
            <person name="Ye J."/>
            <person name="Yeh R.-F."/>
            <person name="Zaveri J.S."/>
            <person name="Zhan M."/>
            <person name="Zhang G."/>
            <person name="Zhao Q."/>
            <person name="Zheng L."/>
            <person name="Zheng X.H."/>
            <person name="Zhong F.N."/>
            <person name="Zhong W."/>
            <person name="Zhou X."/>
            <person name="Zhu S.C."/>
            <person name="Zhu X."/>
            <person name="Smith H.O."/>
            <person name="Gibbs R.A."/>
            <person name="Myers E.W."/>
            <person name="Rubin G.M."/>
            <person name="Venter J.C."/>
        </authorList>
    </citation>
    <scope>NUCLEOTIDE SEQUENCE [LARGE SCALE GENOMIC DNA]</scope>
    <source>
        <strain>Berkeley</strain>
    </source>
</reference>
<reference key="2">
    <citation type="journal article" date="2002" name="Genome Biol.">
        <title>Annotation of the Drosophila melanogaster euchromatic genome: a systematic review.</title>
        <authorList>
            <person name="Misra S."/>
            <person name="Crosby M.A."/>
            <person name="Mungall C.J."/>
            <person name="Matthews B.B."/>
            <person name="Campbell K.S."/>
            <person name="Hradecky P."/>
            <person name="Huang Y."/>
            <person name="Kaminker J.S."/>
            <person name="Millburn G.H."/>
            <person name="Prochnik S.E."/>
            <person name="Smith C.D."/>
            <person name="Tupy J.L."/>
            <person name="Whitfield E.J."/>
            <person name="Bayraktaroglu L."/>
            <person name="Berman B.P."/>
            <person name="Bettencourt B.R."/>
            <person name="Celniker S.E."/>
            <person name="de Grey A.D.N.J."/>
            <person name="Drysdale R.A."/>
            <person name="Harris N.L."/>
            <person name="Richter J."/>
            <person name="Russo S."/>
            <person name="Schroeder A.J."/>
            <person name="Shu S.Q."/>
            <person name="Stapleton M."/>
            <person name="Yamada C."/>
            <person name="Ashburner M."/>
            <person name="Gelbart W.M."/>
            <person name="Rubin G.M."/>
            <person name="Lewis S.E."/>
        </authorList>
    </citation>
    <scope>GENOME REANNOTATION</scope>
    <source>
        <strain>Berkeley</strain>
    </source>
</reference>
<reference key="3">
    <citation type="journal article" date="2002" name="Genome Biol.">
        <title>A Drosophila full-length cDNA resource.</title>
        <authorList>
            <person name="Stapleton M."/>
            <person name="Carlson J.W."/>
            <person name="Brokstein P."/>
            <person name="Yu C."/>
            <person name="Champe M."/>
            <person name="George R.A."/>
            <person name="Guarin H."/>
            <person name="Kronmiller B."/>
            <person name="Pacleb J.M."/>
            <person name="Park S."/>
            <person name="Wan K.H."/>
            <person name="Rubin G.M."/>
            <person name="Celniker S.E."/>
        </authorList>
    </citation>
    <scope>NUCLEOTIDE SEQUENCE [LARGE SCALE MRNA]</scope>
    <source>
        <strain>Berkeley</strain>
        <tissue>Head</tissue>
    </source>
</reference>
<feature type="transit peptide" description="Mitochondrion" evidence="1">
    <location>
        <begin position="1"/>
        <end position="25"/>
    </location>
</feature>
<feature type="chain" id="PRO_0000207586" description="Ubiquinone biosynthesis monooxygenase COQ6, mitochondrial">
    <location>
        <begin position="26"/>
        <end position="477"/>
    </location>
</feature>
<accession>Q9VMQ5</accession>
<organism>
    <name type="scientific">Drosophila melanogaster</name>
    <name type="common">Fruit fly</name>
    <dbReference type="NCBI Taxonomy" id="7227"/>
    <lineage>
        <taxon>Eukaryota</taxon>
        <taxon>Metazoa</taxon>
        <taxon>Ecdysozoa</taxon>
        <taxon>Arthropoda</taxon>
        <taxon>Hexapoda</taxon>
        <taxon>Insecta</taxon>
        <taxon>Pterygota</taxon>
        <taxon>Neoptera</taxon>
        <taxon>Endopterygota</taxon>
        <taxon>Diptera</taxon>
        <taxon>Brachycera</taxon>
        <taxon>Muscomorpha</taxon>
        <taxon>Ephydroidea</taxon>
        <taxon>Drosophilidae</taxon>
        <taxon>Drosophila</taxon>
        <taxon>Sophophora</taxon>
    </lineage>
</organism>
<protein>
    <recommendedName>
        <fullName evidence="1">Ubiquinone biosynthesis monooxygenase COQ6, mitochondrial</fullName>
        <ecNumber evidence="1">1.14.15.45</ecNumber>
    </recommendedName>
    <alternativeName>
        <fullName evidence="1">2-methoxy-6-polyprenolphenol 4-hydroxylase</fullName>
        <ecNumber evidence="1">1.14.15.46</ecNumber>
    </alternativeName>
</protein>
<sequence length="477" mass="51994">MLGVLRIQGALASAGQARLLSVRLLASKSTTDMTTNRGESTQSTSTEHFDIIIGGGGLVGTTLAAALAKNSTLADKKVLLLEGAPEFRGFNPTGPYQNRVSAINHNSIELFKSIDAWKHIESARYKPVKQMQVWESNTDALIQFQHDNFASDVACIIENDLILDAVYALAKESPNVEILNKARIQCVRLPRDSNSNHSELQLEDGRNFSCDLLIGADGANSVVRKEMNVDVFSLNYDRMGLVATLELGEDACDNSVAWQRFLPNGPVALLPLTDRLSSLVWSTTNEQAKMLQALPPTEFVDALNEAFCRQYPRVELADKAVQALNSLFGHNGSQHQVQYPPRVCGVLDKSRATFPLGFLHASSYVCNGAALVGDAAHRVHPLAGQGVNLGFSDVRYLVESLAAGAYAGFKLGDKQHLIKYERKCLAKNVPIMLGVHGLHTLYATQFSPVVLLRSLGLQLTQNLPPVKNLFMRGAMGQ</sequence>
<evidence type="ECO:0000255" key="1">
    <source>
        <dbReference type="HAMAP-Rule" id="MF_03193"/>
    </source>
</evidence>
<dbReference type="EC" id="1.14.15.45" evidence="1"/>
<dbReference type="EC" id="1.14.15.46" evidence="1"/>
<dbReference type="EMBL" id="AE014134">
    <property type="protein sequence ID" value="AAF52257.1"/>
    <property type="molecule type" value="Genomic_DNA"/>
</dbReference>
<dbReference type="EMBL" id="AY058443">
    <property type="protein sequence ID" value="AAL13672.1"/>
    <property type="molecule type" value="mRNA"/>
</dbReference>
<dbReference type="RefSeq" id="NP_608934.1">
    <property type="nucleotide sequence ID" value="NM_135090.4"/>
</dbReference>
<dbReference type="SMR" id="Q9VMQ5"/>
<dbReference type="BioGRID" id="59945">
    <property type="interactions" value="21"/>
</dbReference>
<dbReference type="DIP" id="DIP-21077N"/>
<dbReference type="FunCoup" id="Q9VMQ5">
    <property type="interactions" value="1300"/>
</dbReference>
<dbReference type="IntAct" id="Q9VMQ5">
    <property type="interactions" value="8"/>
</dbReference>
<dbReference type="STRING" id="7227.FBpp0078759"/>
<dbReference type="PaxDb" id="7227-FBpp0078759"/>
<dbReference type="DNASU" id="33777"/>
<dbReference type="EnsemblMetazoa" id="FBtr0079128">
    <property type="protein sequence ID" value="FBpp0078759"/>
    <property type="gene ID" value="FBgn0031713"/>
</dbReference>
<dbReference type="GeneID" id="33777"/>
<dbReference type="KEGG" id="dme:Dmel_CG7277"/>
<dbReference type="UCSC" id="CG7277-RA">
    <property type="organism name" value="d. melanogaster"/>
</dbReference>
<dbReference type="AGR" id="FB:FBgn0031713"/>
<dbReference type="CTD" id="51004"/>
<dbReference type="FlyBase" id="FBgn0031713">
    <property type="gene designation" value="Coq6"/>
</dbReference>
<dbReference type="VEuPathDB" id="VectorBase:FBgn0031713"/>
<dbReference type="eggNOG" id="KOG3855">
    <property type="taxonomic scope" value="Eukaryota"/>
</dbReference>
<dbReference type="GeneTree" id="ENSGT00390000015152"/>
<dbReference type="HOGENOM" id="CLU_009665_8_0_1"/>
<dbReference type="InParanoid" id="Q9VMQ5"/>
<dbReference type="OMA" id="VKQMQVW"/>
<dbReference type="OrthoDB" id="683240at2759"/>
<dbReference type="PhylomeDB" id="Q9VMQ5"/>
<dbReference type="Reactome" id="R-DME-2142789">
    <property type="pathway name" value="Ubiquinol biosynthesis"/>
</dbReference>
<dbReference type="UniPathway" id="UPA00232"/>
<dbReference type="BioGRID-ORCS" id="33777">
    <property type="hits" value="0 hits in 1 CRISPR screen"/>
</dbReference>
<dbReference type="GenomeRNAi" id="33777"/>
<dbReference type="PRO" id="PR:Q9VMQ5"/>
<dbReference type="Proteomes" id="UP000000803">
    <property type="component" value="Chromosome 2L"/>
</dbReference>
<dbReference type="Bgee" id="FBgn0031713">
    <property type="expression patterns" value="Expressed in muscle cell in haltere and 131 other cell types or tissues"/>
</dbReference>
<dbReference type="GO" id="GO:0031314">
    <property type="term" value="C:extrinsic component of mitochondrial inner membrane"/>
    <property type="evidence" value="ECO:0007669"/>
    <property type="project" value="UniProtKB-UniRule"/>
</dbReference>
<dbReference type="GO" id="GO:0005743">
    <property type="term" value="C:mitochondrial inner membrane"/>
    <property type="evidence" value="ECO:0000250"/>
    <property type="project" value="FlyBase"/>
</dbReference>
<dbReference type="GO" id="GO:0005739">
    <property type="term" value="C:mitochondrion"/>
    <property type="evidence" value="ECO:0000318"/>
    <property type="project" value="GO_Central"/>
</dbReference>
<dbReference type="GO" id="GO:0110142">
    <property type="term" value="C:ubiquinone biosynthesis complex"/>
    <property type="evidence" value="ECO:0000250"/>
    <property type="project" value="FlyBase"/>
</dbReference>
<dbReference type="GO" id="GO:0120538">
    <property type="term" value="F:2-methoxy-6-polyprenolphenol 4-hydroxylase activity"/>
    <property type="evidence" value="ECO:0000250"/>
    <property type="project" value="FlyBase"/>
</dbReference>
<dbReference type="GO" id="GO:0106364">
    <property type="term" value="F:4-hydroxy-3-all-trans-polyprenylbenzoate oxygenase activity"/>
    <property type="evidence" value="ECO:0000250"/>
    <property type="project" value="FlyBase"/>
</dbReference>
<dbReference type="GO" id="GO:0071949">
    <property type="term" value="F:FAD binding"/>
    <property type="evidence" value="ECO:0007669"/>
    <property type="project" value="InterPro"/>
</dbReference>
<dbReference type="GO" id="GO:0016491">
    <property type="term" value="F:oxidoreductase activity"/>
    <property type="evidence" value="ECO:0000318"/>
    <property type="project" value="GO_Central"/>
</dbReference>
<dbReference type="GO" id="GO:0016712">
    <property type="term" value="F:oxidoreductase activity, acting on paired donors, with incorporation or reduction of molecular oxygen, reduced flavin or flavoprotein as one donor, and incorporation of one atom of oxygen"/>
    <property type="evidence" value="ECO:0007669"/>
    <property type="project" value="UniProtKB-UniRule"/>
</dbReference>
<dbReference type="GO" id="GO:0006744">
    <property type="term" value="P:ubiquinone biosynthetic process"/>
    <property type="evidence" value="ECO:0000315"/>
    <property type="project" value="FlyBase"/>
</dbReference>
<dbReference type="FunFam" id="3.50.50.60:FF:000021">
    <property type="entry name" value="Ubiquinone biosynthesis monooxygenase COQ6"/>
    <property type="match status" value="1"/>
</dbReference>
<dbReference type="FunFam" id="3.50.50.60:FF:000086">
    <property type="entry name" value="Ubiquinone biosynthesis monooxygenase COQ6, mitochondrial"/>
    <property type="match status" value="1"/>
</dbReference>
<dbReference type="Gene3D" id="3.50.50.60">
    <property type="entry name" value="FAD/NAD(P)-binding domain"/>
    <property type="match status" value="2"/>
</dbReference>
<dbReference type="HAMAP" id="MF_03193">
    <property type="entry name" value="COQ6_monooxygenase"/>
    <property type="match status" value="1"/>
</dbReference>
<dbReference type="InterPro" id="IPR002938">
    <property type="entry name" value="FAD-bd"/>
</dbReference>
<dbReference type="InterPro" id="IPR036188">
    <property type="entry name" value="FAD/NAD-bd_sf"/>
</dbReference>
<dbReference type="InterPro" id="IPR018168">
    <property type="entry name" value="Ubi_Hdrlase_CS"/>
</dbReference>
<dbReference type="InterPro" id="IPR010971">
    <property type="entry name" value="UbiH/COQ6"/>
</dbReference>
<dbReference type="InterPro" id="IPR051205">
    <property type="entry name" value="UbiH/COQ6_monooxygenase"/>
</dbReference>
<dbReference type="InterPro" id="IPR000689">
    <property type="entry name" value="UbQ_mOase_COQ6"/>
</dbReference>
<dbReference type="NCBIfam" id="TIGR01989">
    <property type="entry name" value="COQ6"/>
    <property type="match status" value="1"/>
</dbReference>
<dbReference type="NCBIfam" id="TIGR01988">
    <property type="entry name" value="Ubi-OHases"/>
    <property type="match status" value="1"/>
</dbReference>
<dbReference type="PANTHER" id="PTHR43876">
    <property type="entry name" value="UBIQUINONE BIOSYNTHESIS MONOOXYGENASE COQ6, MITOCHONDRIAL"/>
    <property type="match status" value="1"/>
</dbReference>
<dbReference type="PANTHER" id="PTHR43876:SF7">
    <property type="entry name" value="UBIQUINONE BIOSYNTHESIS MONOOXYGENASE COQ6, MITOCHONDRIAL"/>
    <property type="match status" value="1"/>
</dbReference>
<dbReference type="Pfam" id="PF01494">
    <property type="entry name" value="FAD_binding_3"/>
    <property type="match status" value="2"/>
</dbReference>
<dbReference type="PRINTS" id="PR00420">
    <property type="entry name" value="RNGMNOXGNASE"/>
</dbReference>
<dbReference type="SUPFAM" id="SSF51905">
    <property type="entry name" value="FAD/NAD(P)-binding domain"/>
    <property type="match status" value="1"/>
</dbReference>
<dbReference type="PROSITE" id="PS01304">
    <property type="entry name" value="UBIH"/>
    <property type="match status" value="1"/>
</dbReference>
<keyword id="KW-0274">FAD</keyword>
<keyword id="KW-0285">Flavoprotein</keyword>
<keyword id="KW-0472">Membrane</keyword>
<keyword id="KW-0496">Mitochondrion</keyword>
<keyword id="KW-0999">Mitochondrion inner membrane</keyword>
<keyword id="KW-0503">Monooxygenase</keyword>
<keyword id="KW-0560">Oxidoreductase</keyword>
<keyword id="KW-1185">Reference proteome</keyword>
<keyword id="KW-0809">Transit peptide</keyword>
<keyword id="KW-0831">Ubiquinone biosynthesis</keyword>
<comment type="function">
    <text evidence="1">FAD-dependent monooxygenase required for two non-consecutive steps during ubiquinone biosynthesis. Required for the C5-ring hydroxylation during ubiquinone biosynthesis by catalyzing the hydroxylation of 4-hydroxy-3-(all-trans-polyprenyl)benzoic acid to 3,4-dihydroxy-5-(all-trans-polyprenyl)benzoic acid. Also acts downstream of coq4, for the C1-hydroxylation during ubiquinone biosynthesis by catalyzing the hydroxylation of 2-methoxy-6-(all-trans-polyprenyl)phenol to 2-methoxy-6-(all-trans-polyprenyl)benzene-1,4-diol. The electrons required for the hydroxylation reaction are funneled indirectly to Coq6 from NADPH via a ferredoxin/ferredoxin reductase system.</text>
</comment>
<comment type="catalytic activity">
    <reaction evidence="1">
        <text>a 4-hydroxy-3-(all-trans-polyprenyl)benzoate + 2 reduced [2Fe-2S]-[ferredoxin] + O2 + 2 H(+) = a 3,4-dihydroxy-5-(all-trans-polyprenyl)benzoate + 2 oxidized [2Fe-2S]-[ferredoxin] + H2O</text>
        <dbReference type="Rhea" id="RHEA:81195"/>
        <dbReference type="Rhea" id="RHEA-COMP:9514"/>
        <dbReference type="Rhea" id="RHEA-COMP:10000"/>
        <dbReference type="Rhea" id="RHEA-COMP:10001"/>
        <dbReference type="Rhea" id="RHEA-COMP:10930"/>
        <dbReference type="ChEBI" id="CHEBI:15377"/>
        <dbReference type="ChEBI" id="CHEBI:15378"/>
        <dbReference type="ChEBI" id="CHEBI:15379"/>
        <dbReference type="ChEBI" id="CHEBI:33737"/>
        <dbReference type="ChEBI" id="CHEBI:33738"/>
        <dbReference type="ChEBI" id="CHEBI:64694"/>
        <dbReference type="ChEBI" id="CHEBI:78396"/>
        <dbReference type="EC" id="1.14.15.45"/>
    </reaction>
</comment>
<comment type="catalytic activity">
    <reaction evidence="1">
        <text>a 2-methoxy-6-(all-trans-polyprenyl)phenol + 2 reduced [2Fe-2S]-[ferredoxin] + O2 + 2 H(+) = a 2-methoxy-6-(all-trans-polyprenyl)benzene-1,4-diol + 2 oxidized [2Fe-2S]-[ferredoxin] + H2O</text>
        <dbReference type="Rhea" id="RHEA:81183"/>
        <dbReference type="Rhea" id="RHEA-COMP:9551"/>
        <dbReference type="Rhea" id="RHEA-COMP:10000"/>
        <dbReference type="Rhea" id="RHEA-COMP:10001"/>
        <dbReference type="Rhea" id="RHEA-COMP:10858"/>
        <dbReference type="ChEBI" id="CHEBI:15377"/>
        <dbReference type="ChEBI" id="CHEBI:15378"/>
        <dbReference type="ChEBI" id="CHEBI:15379"/>
        <dbReference type="ChEBI" id="CHEBI:33737"/>
        <dbReference type="ChEBI" id="CHEBI:33738"/>
        <dbReference type="ChEBI" id="CHEBI:62731"/>
        <dbReference type="ChEBI" id="CHEBI:84166"/>
        <dbReference type="EC" id="1.14.15.46"/>
    </reaction>
</comment>
<comment type="cofactor">
    <cofactor evidence="1">
        <name>FAD</name>
        <dbReference type="ChEBI" id="CHEBI:57692"/>
    </cofactor>
</comment>
<comment type="pathway">
    <text evidence="1">Cofactor biosynthesis; ubiquinone biosynthesis.</text>
</comment>
<comment type="subunit">
    <text evidence="1">Component of a multi-subunit COQ enzyme complex.</text>
</comment>
<comment type="subcellular location">
    <subcellularLocation>
        <location evidence="1">Mitochondrion inner membrane</location>
        <topology evidence="1">Peripheral membrane protein</topology>
        <orientation evidence="1">Matrix side</orientation>
    </subcellularLocation>
</comment>
<comment type="similarity">
    <text evidence="1">Belongs to the UbiH/COQ6 family.</text>
</comment>